<keyword id="KW-1003">Cell membrane</keyword>
<keyword id="KW-0297">G-protein coupled receptor</keyword>
<keyword id="KW-0472">Membrane</keyword>
<keyword id="KW-0675">Receptor</keyword>
<keyword id="KW-1185">Reference proteome</keyword>
<keyword id="KW-0807">Transducer</keyword>
<keyword id="KW-0812">Transmembrane</keyword>
<keyword id="KW-1133">Transmembrane helix</keyword>
<sequence>MHRSISIRILITNLMIVILGLVGLTGNAIVFWLLLFRLRRNAFSIYILNLALADFLFLLCHIIASTEHILTFSSPNSIFINCLYTFRVLLYIAGLNMLSAISIERCLSVMCPIWYRCHRPEHTSTVMCAMIWVLSLLLCILYRYFCGFLDTKYEDDYGCLAMNFLTTAYLMFLFVVLCVSSLALLARLFCGAGRMKLTRLYVTITLTLLVFLLCGLPCGFYWFLLSKIKNVFSVFEFSLYLTSVVLTAINSCANPIIYFFVGSFRHRLKHQTLKMVLQSALQDTPETPENMVEMSRNKAEL</sequence>
<gene>
    <name type="primary">Mrgpra6</name>
    <name type="synonym">Mrga6</name>
</gene>
<name>MRGA6_MOUSE</name>
<comment type="function">
    <text evidence="1">Orphan receptor. May be a receptor for RFamide-family neuropeptides such as NPFF and NPAF, which are analgesic in vivo. May regulate nociceptor function and/or development, including the sensation or modulation of pain (By similarity).</text>
</comment>
<comment type="subcellular location">
    <subcellularLocation>
        <location>Cell membrane</location>
        <topology>Multi-pass membrane protein</topology>
    </subcellularLocation>
</comment>
<comment type="tissue specificity">
    <text evidence="4">Expressed in a subset of sensory neurons that includes nociceptors. Expressed in the subclass of non-peptidergic sensory neurons that are IB4(+) and VR1(-).</text>
</comment>
<comment type="similarity">
    <text evidence="3">Belongs to the G-protein coupled receptor 1 family. Mas subfamily.</text>
</comment>
<organism>
    <name type="scientific">Mus musculus</name>
    <name type="common">Mouse</name>
    <dbReference type="NCBI Taxonomy" id="10090"/>
    <lineage>
        <taxon>Eukaryota</taxon>
        <taxon>Metazoa</taxon>
        <taxon>Chordata</taxon>
        <taxon>Craniata</taxon>
        <taxon>Vertebrata</taxon>
        <taxon>Euteleostomi</taxon>
        <taxon>Mammalia</taxon>
        <taxon>Eutheria</taxon>
        <taxon>Euarchontoglires</taxon>
        <taxon>Glires</taxon>
        <taxon>Rodentia</taxon>
        <taxon>Myomorpha</taxon>
        <taxon>Muroidea</taxon>
        <taxon>Muridae</taxon>
        <taxon>Murinae</taxon>
        <taxon>Mus</taxon>
        <taxon>Mus</taxon>
    </lineage>
</organism>
<proteinExistence type="evidence at transcript level"/>
<evidence type="ECO:0000250" key="1"/>
<evidence type="ECO:0000255" key="2"/>
<evidence type="ECO:0000255" key="3">
    <source>
        <dbReference type="PROSITE-ProRule" id="PRU00521"/>
    </source>
</evidence>
<evidence type="ECO:0000269" key="4">
    <source>
    </source>
</evidence>
<evidence type="ECO:0000305" key="5"/>
<accession>Q91ZC6</accession>
<accession>A3KMK5</accession>
<accession>E9QN26</accession>
<reference key="1">
    <citation type="journal article" date="2001" name="Cell">
        <title>A diverse family of GPCRs expressed in specific subsets of nociceptive sensory neurons.</title>
        <authorList>
            <person name="Dong X."/>
            <person name="Han S.-K."/>
            <person name="Zylka M.J."/>
            <person name="Simon M.I."/>
            <person name="Anderson D.J."/>
        </authorList>
    </citation>
    <scope>NUCLEOTIDE SEQUENCE [GENOMIC DNA]</scope>
    <scope>TISSUE SPECIFICITY</scope>
    <source>
        <strain>129/SvJ</strain>
    </source>
</reference>
<reference key="2">
    <citation type="journal article" date="2009" name="PLoS Biol.">
        <title>Lineage-specific biology revealed by a finished genome assembly of the mouse.</title>
        <authorList>
            <person name="Church D.M."/>
            <person name="Goodstadt L."/>
            <person name="Hillier L.W."/>
            <person name="Zody M.C."/>
            <person name="Goldstein S."/>
            <person name="She X."/>
            <person name="Bult C.J."/>
            <person name="Agarwala R."/>
            <person name="Cherry J.L."/>
            <person name="DiCuccio M."/>
            <person name="Hlavina W."/>
            <person name="Kapustin Y."/>
            <person name="Meric P."/>
            <person name="Maglott D."/>
            <person name="Birtle Z."/>
            <person name="Marques A.C."/>
            <person name="Graves T."/>
            <person name="Zhou S."/>
            <person name="Teague B."/>
            <person name="Potamousis K."/>
            <person name="Churas C."/>
            <person name="Place M."/>
            <person name="Herschleb J."/>
            <person name="Runnheim R."/>
            <person name="Forrest D."/>
            <person name="Amos-Landgraf J."/>
            <person name="Schwartz D.C."/>
            <person name="Cheng Z."/>
            <person name="Lindblad-Toh K."/>
            <person name="Eichler E.E."/>
            <person name="Ponting C.P."/>
        </authorList>
    </citation>
    <scope>NUCLEOTIDE SEQUENCE [LARGE SCALE GENOMIC DNA]</scope>
    <source>
        <strain>C57BL/6J</strain>
    </source>
</reference>
<reference key="3">
    <citation type="journal article" date="2004" name="Genome Res.">
        <title>The status, quality, and expansion of the NIH full-length cDNA project: the Mammalian Gene Collection (MGC).</title>
        <authorList>
            <consortium name="The MGC Project Team"/>
        </authorList>
    </citation>
    <scope>NUCLEOTIDE SEQUENCE [LARGE SCALE MRNA]</scope>
    <source>
        <tissue>Brain</tissue>
    </source>
</reference>
<protein>
    <recommendedName>
        <fullName>Mas-related G-protein coupled receptor member A6</fullName>
    </recommendedName>
</protein>
<feature type="chain" id="PRO_0000069752" description="Mas-related G-protein coupled receptor member A6">
    <location>
        <begin position="1"/>
        <end position="301"/>
    </location>
</feature>
<feature type="topological domain" description="Extracellular" evidence="2">
    <location>
        <begin position="1"/>
        <end position="15"/>
    </location>
</feature>
<feature type="transmembrane region" description="Helical; Name=1" evidence="2">
    <location>
        <begin position="16"/>
        <end position="36"/>
    </location>
</feature>
<feature type="topological domain" description="Cytoplasmic" evidence="2">
    <location>
        <begin position="37"/>
        <end position="42"/>
    </location>
</feature>
<feature type="transmembrane region" description="Helical; Name=2" evidence="2">
    <location>
        <begin position="43"/>
        <end position="63"/>
    </location>
</feature>
<feature type="topological domain" description="Extracellular" evidence="2">
    <location>
        <begin position="64"/>
        <end position="77"/>
    </location>
</feature>
<feature type="transmembrane region" description="Helical; Name=3" evidence="2">
    <location>
        <begin position="78"/>
        <end position="98"/>
    </location>
</feature>
<feature type="topological domain" description="Cytoplasmic" evidence="2">
    <location>
        <begin position="99"/>
        <end position="128"/>
    </location>
</feature>
<feature type="transmembrane region" description="Helical; Name=4" evidence="2">
    <location>
        <begin position="129"/>
        <end position="149"/>
    </location>
</feature>
<feature type="topological domain" description="Extracellular" evidence="2">
    <location>
        <begin position="150"/>
        <end position="163"/>
    </location>
</feature>
<feature type="transmembrane region" description="Helical; Name=5" evidence="2">
    <location>
        <begin position="164"/>
        <end position="184"/>
    </location>
</feature>
<feature type="topological domain" description="Cytoplasmic" evidence="2">
    <location>
        <begin position="185"/>
        <end position="203"/>
    </location>
</feature>
<feature type="transmembrane region" description="Helical; Name=6" evidence="2">
    <location>
        <begin position="204"/>
        <end position="224"/>
    </location>
</feature>
<feature type="topological domain" description="Extracellular" evidence="2">
    <location>
        <begin position="225"/>
        <end position="240"/>
    </location>
</feature>
<feature type="transmembrane region" description="Helical; Name=7" evidence="2">
    <location>
        <begin position="241"/>
        <end position="261"/>
    </location>
</feature>
<feature type="topological domain" description="Cytoplasmic" evidence="2">
    <location>
        <begin position="262"/>
        <end position="301"/>
    </location>
</feature>
<feature type="sequence conflict" description="In Ref. 1; AAK91792 and 3; AAI32199/AAI32205." evidence="5" ref="1 3">
    <original>N</original>
    <variation>S</variation>
    <location>
        <position position="96"/>
    </location>
</feature>
<feature type="sequence conflict" description="In Ref. 1; AAK91792 and 3; AAI32199/AAI32205." evidence="5" ref="1 3">
    <original>R</original>
    <variation>S</variation>
    <location>
        <position position="119"/>
    </location>
</feature>
<feature type="sequence conflict" description="In Ref. 1; AAK91792 and 3; AAI32199/AAI32205." evidence="5" ref="1 3">
    <original>S</original>
    <variation>T</variation>
    <location>
        <position position="233"/>
    </location>
</feature>
<feature type="sequence conflict" description="In Ref. 1; AAK91792 and 3; AAI32199/AAI32205." evidence="5" ref="1 3">
    <original>T</original>
    <variation>A</variation>
    <location>
        <position position="242"/>
    </location>
</feature>
<dbReference type="EMBL" id="AY042196">
    <property type="protein sequence ID" value="AAK91792.1"/>
    <property type="molecule type" value="Genomic_DNA"/>
</dbReference>
<dbReference type="EMBL" id="AC115898">
    <property type="status" value="NOT_ANNOTATED_CDS"/>
    <property type="molecule type" value="Genomic_DNA"/>
</dbReference>
<dbReference type="EMBL" id="BC132198">
    <property type="protein sequence ID" value="AAI32199.1"/>
    <property type="molecule type" value="mRNA"/>
</dbReference>
<dbReference type="EMBL" id="BC132204">
    <property type="protein sequence ID" value="AAI32205.1"/>
    <property type="molecule type" value="mRNA"/>
</dbReference>
<dbReference type="RefSeq" id="NP_001295466.1">
    <property type="nucleotide sequence ID" value="NM_001308537.1"/>
</dbReference>
<dbReference type="SMR" id="Q91ZC6"/>
<dbReference type="FunCoup" id="Q91ZC6">
    <property type="interactions" value="37"/>
</dbReference>
<dbReference type="PaxDb" id="10090-ENSMUSP00000073463"/>
<dbReference type="GeneID" id="381886"/>
<dbReference type="KEGG" id="mmu:381886"/>
<dbReference type="AGR" id="MGI:3033107"/>
<dbReference type="CTD" id="381886"/>
<dbReference type="MGI" id="MGI:3033107">
    <property type="gene designation" value="Mrgpra6"/>
</dbReference>
<dbReference type="VEuPathDB" id="HostDB:ENSMUSG00000052303"/>
<dbReference type="eggNOG" id="ENOG502RTWA">
    <property type="taxonomic scope" value="Eukaryota"/>
</dbReference>
<dbReference type="HOGENOM" id="CLU_009579_4_1_1"/>
<dbReference type="InParanoid" id="Q91ZC6"/>
<dbReference type="OMA" id="EVLYCHV"/>
<dbReference type="OrthoDB" id="6091802at2759"/>
<dbReference type="PhylomeDB" id="Q91ZC6"/>
<dbReference type="TreeFam" id="TF336336"/>
<dbReference type="BioGRID-ORCS" id="381886">
    <property type="hits" value="0 hits in 53 CRISPR screens"/>
</dbReference>
<dbReference type="PRO" id="PR:Q91ZC6"/>
<dbReference type="Proteomes" id="UP000000589">
    <property type="component" value="Chromosome 7"/>
</dbReference>
<dbReference type="RNAct" id="Q91ZC6">
    <property type="molecule type" value="protein"/>
</dbReference>
<dbReference type="Bgee" id="ENSMUSG00000052303">
    <property type="expression patterns" value="Expressed in spermatid"/>
</dbReference>
<dbReference type="ExpressionAtlas" id="Q91ZC6">
    <property type="expression patterns" value="baseline and differential"/>
</dbReference>
<dbReference type="GO" id="GO:0005886">
    <property type="term" value="C:plasma membrane"/>
    <property type="evidence" value="ECO:0007669"/>
    <property type="project" value="UniProtKB-SubCell"/>
</dbReference>
<dbReference type="GO" id="GO:0004930">
    <property type="term" value="F:G protein-coupled receptor activity"/>
    <property type="evidence" value="ECO:0007669"/>
    <property type="project" value="UniProtKB-KW"/>
</dbReference>
<dbReference type="CDD" id="cd15105">
    <property type="entry name" value="7tmA_MrgprA"/>
    <property type="match status" value="1"/>
</dbReference>
<dbReference type="FunFam" id="1.20.1070.10:FF:000140">
    <property type="entry name" value="Mas-related G-protein coupled receptor member X2"/>
    <property type="match status" value="1"/>
</dbReference>
<dbReference type="Gene3D" id="1.20.1070.10">
    <property type="entry name" value="Rhodopsin 7-helix transmembrane proteins"/>
    <property type="match status" value="1"/>
</dbReference>
<dbReference type="InterPro" id="IPR000276">
    <property type="entry name" value="GPCR_Rhodpsn"/>
</dbReference>
<dbReference type="InterPro" id="IPR017452">
    <property type="entry name" value="GPCR_Rhodpsn_7TM"/>
</dbReference>
<dbReference type="InterPro" id="IPR026233">
    <property type="entry name" value="MRGPCRA"/>
</dbReference>
<dbReference type="InterPro" id="IPR026234">
    <property type="entry name" value="MRGPCRFAMILY"/>
</dbReference>
<dbReference type="PANTHER" id="PTHR11334">
    <property type="entry name" value="MAS-RELATED G-PROTEIN COUPLED RECEPTOR"/>
    <property type="match status" value="1"/>
</dbReference>
<dbReference type="PANTHER" id="PTHR11334:SF33">
    <property type="entry name" value="MAS-RELATED GPR, MEMBER A2A-RELATED"/>
    <property type="match status" value="1"/>
</dbReference>
<dbReference type="Pfam" id="PF00001">
    <property type="entry name" value="7tm_1"/>
    <property type="match status" value="1"/>
</dbReference>
<dbReference type="PRINTS" id="PR00237">
    <property type="entry name" value="GPCRRHODOPSN"/>
</dbReference>
<dbReference type="PRINTS" id="PR02109">
    <property type="entry name" value="MRGPCRA"/>
</dbReference>
<dbReference type="PRINTS" id="PR02108">
    <property type="entry name" value="MRGPCRFAMILY"/>
</dbReference>
<dbReference type="SUPFAM" id="SSF81321">
    <property type="entry name" value="Family A G protein-coupled receptor-like"/>
    <property type="match status" value="1"/>
</dbReference>
<dbReference type="PROSITE" id="PS00237">
    <property type="entry name" value="G_PROTEIN_RECEP_F1_1"/>
    <property type="match status" value="1"/>
</dbReference>
<dbReference type="PROSITE" id="PS50262">
    <property type="entry name" value="G_PROTEIN_RECEP_F1_2"/>
    <property type="match status" value="1"/>
</dbReference>